<proteinExistence type="inferred from homology"/>
<accession>Q8MBQ4</accession>
<gene>
    <name evidence="1" type="primary">atpB</name>
</gene>
<reference key="1">
    <citation type="journal article" date="2002" name="Am. J. Bot.">
        <title>Monophyly of the Convolvulaceae and circumscription of their major lineages based on DNA sequences of multiple chloroplast loci.</title>
        <authorList>
            <person name="Stefanovic S."/>
            <person name="Krueger L."/>
            <person name="Olmstead R.G."/>
        </authorList>
        <dbReference type="AGRICOLA" id="IND23320510"/>
    </citation>
    <scope>NUCLEOTIDE SEQUENCE [GENOMIC DNA]</scope>
</reference>
<organism>
    <name type="scientific">Ipomoea coccinea</name>
    <name type="common">Scarlet morning-glory</name>
    <name type="synonym">Quamoclit coccinea</name>
    <dbReference type="NCBI Taxonomy" id="28523"/>
    <lineage>
        <taxon>Eukaryota</taxon>
        <taxon>Viridiplantae</taxon>
        <taxon>Streptophyta</taxon>
        <taxon>Embryophyta</taxon>
        <taxon>Tracheophyta</taxon>
        <taxon>Spermatophyta</taxon>
        <taxon>Magnoliopsida</taxon>
        <taxon>eudicotyledons</taxon>
        <taxon>Gunneridae</taxon>
        <taxon>Pentapetalae</taxon>
        <taxon>asterids</taxon>
        <taxon>lamiids</taxon>
        <taxon>Solanales</taxon>
        <taxon>Convolvulaceae</taxon>
        <taxon>Ipomoeeae</taxon>
        <taxon>Ipomoea</taxon>
    </lineage>
</organism>
<dbReference type="EC" id="7.1.2.2" evidence="1"/>
<dbReference type="EMBL" id="AY100746">
    <property type="protein sequence ID" value="AAM52100.1"/>
    <property type="molecule type" value="Genomic_DNA"/>
</dbReference>
<dbReference type="GO" id="GO:0009535">
    <property type="term" value="C:chloroplast thylakoid membrane"/>
    <property type="evidence" value="ECO:0007669"/>
    <property type="project" value="UniProtKB-SubCell"/>
</dbReference>
<dbReference type="GO" id="GO:0005739">
    <property type="term" value="C:mitochondrion"/>
    <property type="evidence" value="ECO:0007669"/>
    <property type="project" value="GOC"/>
</dbReference>
<dbReference type="GO" id="GO:0045259">
    <property type="term" value="C:proton-transporting ATP synthase complex"/>
    <property type="evidence" value="ECO:0007669"/>
    <property type="project" value="UniProtKB-KW"/>
</dbReference>
<dbReference type="GO" id="GO:0005524">
    <property type="term" value="F:ATP binding"/>
    <property type="evidence" value="ECO:0007669"/>
    <property type="project" value="UniProtKB-UniRule"/>
</dbReference>
<dbReference type="GO" id="GO:0016887">
    <property type="term" value="F:ATP hydrolysis activity"/>
    <property type="evidence" value="ECO:0007669"/>
    <property type="project" value="InterPro"/>
</dbReference>
<dbReference type="GO" id="GO:0046933">
    <property type="term" value="F:proton-transporting ATP synthase activity, rotational mechanism"/>
    <property type="evidence" value="ECO:0007669"/>
    <property type="project" value="UniProtKB-UniRule"/>
</dbReference>
<dbReference type="GO" id="GO:0042776">
    <property type="term" value="P:proton motive force-driven mitochondrial ATP synthesis"/>
    <property type="evidence" value="ECO:0007669"/>
    <property type="project" value="TreeGrafter"/>
</dbReference>
<dbReference type="CDD" id="cd18110">
    <property type="entry name" value="ATP-synt_F1_beta_C"/>
    <property type="match status" value="1"/>
</dbReference>
<dbReference type="CDD" id="cd18115">
    <property type="entry name" value="ATP-synt_F1_beta_N"/>
    <property type="match status" value="1"/>
</dbReference>
<dbReference type="CDD" id="cd01133">
    <property type="entry name" value="F1-ATPase_beta_CD"/>
    <property type="match status" value="1"/>
</dbReference>
<dbReference type="FunFam" id="1.10.1140.10:FF:000001">
    <property type="entry name" value="ATP synthase subunit beta"/>
    <property type="match status" value="1"/>
</dbReference>
<dbReference type="FunFam" id="3.40.50.12240:FF:000006">
    <property type="entry name" value="ATP synthase subunit beta"/>
    <property type="match status" value="1"/>
</dbReference>
<dbReference type="FunFam" id="3.40.50.300:FF:000004">
    <property type="entry name" value="ATP synthase subunit beta"/>
    <property type="match status" value="1"/>
</dbReference>
<dbReference type="FunFam" id="2.40.10.170:FF:000002">
    <property type="entry name" value="ATP synthase subunit beta, chloroplastic"/>
    <property type="match status" value="1"/>
</dbReference>
<dbReference type="Gene3D" id="2.40.10.170">
    <property type="match status" value="1"/>
</dbReference>
<dbReference type="Gene3D" id="1.10.1140.10">
    <property type="entry name" value="Bovine Mitochondrial F1-atpase, Atp Synthase Beta Chain, Chain D, domain 3"/>
    <property type="match status" value="1"/>
</dbReference>
<dbReference type="Gene3D" id="3.40.50.300">
    <property type="entry name" value="P-loop containing nucleotide triphosphate hydrolases"/>
    <property type="match status" value="1"/>
</dbReference>
<dbReference type="HAMAP" id="MF_01347">
    <property type="entry name" value="ATP_synth_beta_bact"/>
    <property type="match status" value="1"/>
</dbReference>
<dbReference type="InterPro" id="IPR003593">
    <property type="entry name" value="AAA+_ATPase"/>
</dbReference>
<dbReference type="InterPro" id="IPR055190">
    <property type="entry name" value="ATP-synt_VA_C"/>
</dbReference>
<dbReference type="InterPro" id="IPR005722">
    <property type="entry name" value="ATP_synth_F1_bsu"/>
</dbReference>
<dbReference type="InterPro" id="IPR020003">
    <property type="entry name" value="ATPase_a/bsu_AS"/>
</dbReference>
<dbReference type="InterPro" id="IPR050053">
    <property type="entry name" value="ATPase_alpha/beta_chains"/>
</dbReference>
<dbReference type="InterPro" id="IPR004100">
    <property type="entry name" value="ATPase_F1/V1/A1_a/bsu_N"/>
</dbReference>
<dbReference type="InterPro" id="IPR036121">
    <property type="entry name" value="ATPase_F1/V1/A1_a/bsu_N_sf"/>
</dbReference>
<dbReference type="InterPro" id="IPR000194">
    <property type="entry name" value="ATPase_F1/V1/A1_a/bsu_nucl-bd"/>
</dbReference>
<dbReference type="InterPro" id="IPR024034">
    <property type="entry name" value="ATPase_F1/V1_b/a_C"/>
</dbReference>
<dbReference type="InterPro" id="IPR027417">
    <property type="entry name" value="P-loop_NTPase"/>
</dbReference>
<dbReference type="NCBIfam" id="TIGR01039">
    <property type="entry name" value="atpD"/>
    <property type="match status" value="1"/>
</dbReference>
<dbReference type="PANTHER" id="PTHR15184">
    <property type="entry name" value="ATP SYNTHASE"/>
    <property type="match status" value="1"/>
</dbReference>
<dbReference type="PANTHER" id="PTHR15184:SF71">
    <property type="entry name" value="ATP SYNTHASE SUBUNIT BETA, MITOCHONDRIAL"/>
    <property type="match status" value="1"/>
</dbReference>
<dbReference type="Pfam" id="PF00006">
    <property type="entry name" value="ATP-synt_ab"/>
    <property type="match status" value="1"/>
</dbReference>
<dbReference type="Pfam" id="PF02874">
    <property type="entry name" value="ATP-synt_ab_N"/>
    <property type="match status" value="1"/>
</dbReference>
<dbReference type="Pfam" id="PF22919">
    <property type="entry name" value="ATP-synt_VA_C"/>
    <property type="match status" value="1"/>
</dbReference>
<dbReference type="SMART" id="SM00382">
    <property type="entry name" value="AAA"/>
    <property type="match status" value="1"/>
</dbReference>
<dbReference type="SUPFAM" id="SSF47917">
    <property type="entry name" value="C-terminal domain of alpha and beta subunits of F1 ATP synthase"/>
    <property type="match status" value="1"/>
</dbReference>
<dbReference type="SUPFAM" id="SSF50615">
    <property type="entry name" value="N-terminal domain of alpha and beta subunits of F1 ATP synthase"/>
    <property type="match status" value="1"/>
</dbReference>
<dbReference type="SUPFAM" id="SSF52540">
    <property type="entry name" value="P-loop containing nucleoside triphosphate hydrolases"/>
    <property type="match status" value="1"/>
</dbReference>
<dbReference type="PROSITE" id="PS00152">
    <property type="entry name" value="ATPASE_ALPHA_BETA"/>
    <property type="match status" value="1"/>
</dbReference>
<feature type="chain" id="PRO_0000254487" description="ATP synthase subunit beta, chloroplastic">
    <location>
        <begin position="1"/>
        <end position="490"/>
    </location>
</feature>
<feature type="binding site" evidence="1">
    <location>
        <begin position="170"/>
        <end position="177"/>
    </location>
    <ligand>
        <name>ATP</name>
        <dbReference type="ChEBI" id="CHEBI:30616"/>
    </ligand>
</feature>
<comment type="function">
    <text evidence="1">Produces ATP from ADP in the presence of a proton gradient across the membrane. The catalytic sites are hosted primarily by the beta subunits.</text>
</comment>
<comment type="catalytic activity">
    <reaction evidence="1">
        <text>ATP + H2O + 4 H(+)(in) = ADP + phosphate + 5 H(+)(out)</text>
        <dbReference type="Rhea" id="RHEA:57720"/>
        <dbReference type="ChEBI" id="CHEBI:15377"/>
        <dbReference type="ChEBI" id="CHEBI:15378"/>
        <dbReference type="ChEBI" id="CHEBI:30616"/>
        <dbReference type="ChEBI" id="CHEBI:43474"/>
        <dbReference type="ChEBI" id="CHEBI:456216"/>
        <dbReference type="EC" id="7.1.2.2"/>
    </reaction>
</comment>
<comment type="subunit">
    <text evidence="1">F-type ATPases have 2 components, CF(1) - the catalytic core - and CF(0) - the membrane proton channel. CF(1) has five subunits: alpha(3), beta(3), gamma(1), delta(1), epsilon(1). CF(0) has four main subunits: a(1), b(1), b'(1) and c(9-12).</text>
</comment>
<comment type="subcellular location">
    <subcellularLocation>
        <location evidence="1">Plastid</location>
        <location evidence="1">Chloroplast thylakoid membrane</location>
        <topology evidence="1">Peripheral membrane protein</topology>
    </subcellularLocation>
</comment>
<comment type="similarity">
    <text evidence="1">Belongs to the ATPase alpha/beta chains family.</text>
</comment>
<protein>
    <recommendedName>
        <fullName evidence="1">ATP synthase subunit beta, chloroplastic</fullName>
        <ecNumber evidence="1">7.1.2.2</ecNumber>
    </recommendedName>
    <alternativeName>
        <fullName evidence="1">ATP synthase F1 sector subunit beta</fullName>
    </alternativeName>
    <alternativeName>
        <fullName evidence="1">F-ATPase subunit beta</fullName>
    </alternativeName>
</protein>
<evidence type="ECO:0000255" key="1">
    <source>
        <dbReference type="HAMAP-Rule" id="MF_01347"/>
    </source>
</evidence>
<name>ATPB_IPOCC</name>
<keyword id="KW-0066">ATP synthesis</keyword>
<keyword id="KW-0067">ATP-binding</keyword>
<keyword id="KW-0139">CF(1)</keyword>
<keyword id="KW-0150">Chloroplast</keyword>
<keyword id="KW-0375">Hydrogen ion transport</keyword>
<keyword id="KW-0406">Ion transport</keyword>
<keyword id="KW-0472">Membrane</keyword>
<keyword id="KW-0547">Nucleotide-binding</keyword>
<keyword id="KW-0934">Plastid</keyword>
<keyword id="KW-0793">Thylakoid</keyword>
<keyword id="KW-1278">Translocase</keyword>
<keyword id="KW-0813">Transport</keyword>
<geneLocation type="chloroplast"/>
<sequence length="490" mass="52951">MRINPTTSGSEVSAVEKKNLGRIVKIIGPVLDVAFPPGKMPNIYNALVVQGRDNEQTNVTCEVQQLLGNNRVRAVAMSDTDGLMRGMEVIDTGAPISVPVGGSTLGRIFNVLGQPVDNLGPVNTNTTSPIHKSAPAFIQLDTKLSIFETGIKVVDLLPPYRRGGKIGLFGGXGVGKTLLIMELINNIAKAHGGLSVFGGVGERTREGNDLYLEMKESGVINEENIPESKVALVYGQMNEPPGARMRVGLTALTMAEYFRDVNEQDVLLFIDNIFRFVQAGSEVSALLGRMPSAVGYQPTLSTEMGSLQERITSTKEGSITSIQAVYVPADDLTDPAPATTFAHLDATTVLSRGLAAKGIYPAVDPLDSTSTMLQPRIVGEEHYETAQRVKQTLQRYKELQDIIAILGLDELSEEDRLTVARARKIERFLSQPFFVAEVFTGSPGKYVGLAETIRGFQLILSGELDGLPEQAFYLVGNIDEATAKAMNLKT</sequence>